<protein>
    <recommendedName>
        <fullName evidence="1">Galactose-6-phosphate isomerase subunit LacA 2</fullName>
        <ecNumber evidence="1">5.3.1.26</ecNumber>
    </recommendedName>
</protein>
<keyword id="KW-0413">Isomerase</keyword>
<keyword id="KW-0423">Lactose metabolism</keyword>
<feature type="chain" id="PRO_0000208129" description="Galactose-6-phosphate isomerase subunit LacA 2">
    <location>
        <begin position="1"/>
        <end position="142"/>
    </location>
</feature>
<name>LACA2_STRP3</name>
<organism>
    <name type="scientific">Streptococcus pyogenes serotype M3 (strain ATCC BAA-595 / MGAS315)</name>
    <dbReference type="NCBI Taxonomy" id="198466"/>
    <lineage>
        <taxon>Bacteria</taxon>
        <taxon>Bacillati</taxon>
        <taxon>Bacillota</taxon>
        <taxon>Bacilli</taxon>
        <taxon>Lactobacillales</taxon>
        <taxon>Streptococcaceae</taxon>
        <taxon>Streptococcus</taxon>
    </lineage>
</organism>
<accession>P0DC06</accession>
<accession>Q7CEQ5</accession>
<accession>Q8NZD7</accession>
<proteinExistence type="inferred from homology"/>
<sequence length="142" mass="15413">MAIIIGADKAGQELKEVIKDYLKEGKYEVVDVSENEVRDFVDTTLAVAKEVNASEDNLGIVIDAYGVGSFMVATKIKGMVAAEVSDERSAYMTRGHNNARIITLGSEISAPGIAKNIIKGFVEGKYDGGRHQVRVDMLNKMC</sequence>
<reference key="1">
    <citation type="journal article" date="2002" name="Proc. Natl. Acad. Sci. U.S.A.">
        <title>Genome sequence of a serotype M3 strain of group A Streptococcus: phage-encoded toxins, the high-virulence phenotype, and clone emergence.</title>
        <authorList>
            <person name="Beres S.B."/>
            <person name="Sylva G.L."/>
            <person name="Barbian K.D."/>
            <person name="Lei B."/>
            <person name="Hoff J.S."/>
            <person name="Mammarella N.D."/>
            <person name="Liu M.-Y."/>
            <person name="Smoot J.C."/>
            <person name="Porcella S.F."/>
            <person name="Parkins L.D."/>
            <person name="Campbell D.S."/>
            <person name="Smith T.M."/>
            <person name="McCormick J.K."/>
            <person name="Leung D.Y.M."/>
            <person name="Schlievert P.M."/>
            <person name="Musser J.M."/>
        </authorList>
    </citation>
    <scope>NUCLEOTIDE SEQUENCE [LARGE SCALE GENOMIC DNA]</scope>
    <source>
        <strain>ATCC BAA-595 / MGAS315</strain>
    </source>
</reference>
<gene>
    <name evidence="1" type="primary">lacA2</name>
    <name type="synonym">lacA.2</name>
    <name type="ordered locus">SpyM3_1659</name>
</gene>
<comment type="catalytic activity">
    <reaction evidence="1">
        <text>aldehydo-D-galactose 6-phosphate = keto-D-tagatose 6-phosphate</text>
        <dbReference type="Rhea" id="RHEA:13033"/>
        <dbReference type="ChEBI" id="CHEBI:58255"/>
        <dbReference type="ChEBI" id="CHEBI:134283"/>
        <dbReference type="EC" id="5.3.1.26"/>
    </reaction>
</comment>
<comment type="pathway">
    <text evidence="1">Carbohydrate metabolism; D-galactose 6-phosphate degradation; D-tagatose 6-phosphate from D-galactose 6-phosphate: step 1/1.</text>
</comment>
<comment type="subunit">
    <text evidence="1">Heteromultimeric protein consisting of LacA and LacB.</text>
</comment>
<comment type="similarity">
    <text evidence="1">Belongs to the LacAB/RpiB family.</text>
</comment>
<evidence type="ECO:0000255" key="1">
    <source>
        <dbReference type="HAMAP-Rule" id="MF_01555"/>
    </source>
</evidence>
<dbReference type="EC" id="5.3.1.26" evidence="1"/>
<dbReference type="EMBL" id="AE014074">
    <property type="protein sequence ID" value="AAM80266.1"/>
    <property type="molecule type" value="Genomic_DNA"/>
</dbReference>
<dbReference type="SMR" id="P0DC06"/>
<dbReference type="KEGG" id="spg:SpyM3_1659"/>
<dbReference type="HOGENOM" id="CLU_091396_4_2_9"/>
<dbReference type="UniPathway" id="UPA00702">
    <property type="reaction ID" value="UER00714"/>
</dbReference>
<dbReference type="Proteomes" id="UP000000564">
    <property type="component" value="Chromosome"/>
</dbReference>
<dbReference type="GO" id="GO:0050044">
    <property type="term" value="F:galactose-6-phosphate isomerase activity"/>
    <property type="evidence" value="ECO:0007669"/>
    <property type="project" value="UniProtKB-UniRule"/>
</dbReference>
<dbReference type="GO" id="GO:0004751">
    <property type="term" value="F:ribose-5-phosphate isomerase activity"/>
    <property type="evidence" value="ECO:0007669"/>
    <property type="project" value="TreeGrafter"/>
</dbReference>
<dbReference type="GO" id="GO:0019316">
    <property type="term" value="P:D-allose catabolic process"/>
    <property type="evidence" value="ECO:0007669"/>
    <property type="project" value="TreeGrafter"/>
</dbReference>
<dbReference type="GO" id="GO:0019388">
    <property type="term" value="P:galactose catabolic process"/>
    <property type="evidence" value="ECO:0007669"/>
    <property type="project" value="UniProtKB-UniPathway"/>
</dbReference>
<dbReference type="GO" id="GO:0019512">
    <property type="term" value="P:lactose catabolic process via tagatose-6-phosphate"/>
    <property type="evidence" value="ECO:0007669"/>
    <property type="project" value="UniProtKB-UniRule"/>
</dbReference>
<dbReference type="GO" id="GO:0009052">
    <property type="term" value="P:pentose-phosphate shunt, non-oxidative branch"/>
    <property type="evidence" value="ECO:0007669"/>
    <property type="project" value="TreeGrafter"/>
</dbReference>
<dbReference type="Gene3D" id="3.40.1400.10">
    <property type="entry name" value="Sugar-phosphate isomerase, RpiB/LacA/LacB"/>
    <property type="match status" value="1"/>
</dbReference>
<dbReference type="HAMAP" id="MF_01555">
    <property type="entry name" value="LacA"/>
    <property type="match status" value="1"/>
</dbReference>
<dbReference type="InterPro" id="IPR004783">
    <property type="entry name" value="LacA"/>
</dbReference>
<dbReference type="InterPro" id="IPR003500">
    <property type="entry name" value="RpiB_LacA_LacB"/>
</dbReference>
<dbReference type="InterPro" id="IPR036569">
    <property type="entry name" value="RpiB_LacA_LacB_sf"/>
</dbReference>
<dbReference type="NCBIfam" id="TIGR01118">
    <property type="entry name" value="lacA"/>
    <property type="match status" value="1"/>
</dbReference>
<dbReference type="NCBIfam" id="NF006380">
    <property type="entry name" value="PRK08621.1"/>
    <property type="match status" value="1"/>
</dbReference>
<dbReference type="NCBIfam" id="TIGR00689">
    <property type="entry name" value="rpiB_lacA_lacB"/>
    <property type="match status" value="1"/>
</dbReference>
<dbReference type="PANTHER" id="PTHR30345:SF5">
    <property type="entry name" value="GALACTOSE-6-PHOSPHATE ISOMERASE SUBUNIT LACA"/>
    <property type="match status" value="1"/>
</dbReference>
<dbReference type="PANTHER" id="PTHR30345">
    <property type="entry name" value="RIBOSE-5-PHOSPHATE ISOMERASE B"/>
    <property type="match status" value="1"/>
</dbReference>
<dbReference type="Pfam" id="PF02502">
    <property type="entry name" value="LacAB_rpiB"/>
    <property type="match status" value="1"/>
</dbReference>
<dbReference type="PIRSF" id="PIRSF005384">
    <property type="entry name" value="RpiB_LacA_B"/>
    <property type="match status" value="1"/>
</dbReference>
<dbReference type="SUPFAM" id="SSF89623">
    <property type="entry name" value="Ribose/Galactose isomerase RpiB/AlsB"/>
    <property type="match status" value="1"/>
</dbReference>